<gene>
    <name type="primary">MIC60</name>
    <name type="ORF">NFIA_108170</name>
</gene>
<keyword id="KW-0175">Coiled coil</keyword>
<keyword id="KW-0472">Membrane</keyword>
<keyword id="KW-0496">Mitochondrion</keyword>
<keyword id="KW-0999">Mitochondrion inner membrane</keyword>
<keyword id="KW-1185">Reference proteome</keyword>
<keyword id="KW-0809">Transit peptide</keyword>
<keyword id="KW-0812">Transmembrane</keyword>
<keyword id="KW-1133">Transmembrane helix</keyword>
<feature type="transit peptide" description="Mitochondrion" evidence="2">
    <location>
        <begin position="1"/>
        <end position="41"/>
    </location>
</feature>
<feature type="chain" id="PRO_0000406661" description="MICOS complex subunit MIC60">
    <location>
        <begin position="42"/>
        <end position="624"/>
    </location>
</feature>
<feature type="topological domain" description="Mitochondrial matrix" evidence="2">
    <location>
        <begin position="42"/>
        <end position="96"/>
    </location>
</feature>
<feature type="transmembrane region" description="Helical" evidence="2">
    <location>
        <begin position="97"/>
        <end position="117"/>
    </location>
</feature>
<feature type="topological domain" description="Mitochondrial intermembrane" evidence="2">
    <location>
        <begin position="118"/>
        <end position="624"/>
    </location>
</feature>
<feature type="region of interest" description="Disordered" evidence="3">
    <location>
        <begin position="42"/>
        <end position="89"/>
    </location>
</feature>
<feature type="region of interest" description="Disordered" evidence="3">
    <location>
        <begin position="156"/>
        <end position="250"/>
    </location>
</feature>
<feature type="coiled-coil region" evidence="2">
    <location>
        <begin position="295"/>
        <end position="440"/>
    </location>
</feature>
<feature type="compositionally biased region" description="Low complexity" evidence="3">
    <location>
        <begin position="46"/>
        <end position="61"/>
    </location>
</feature>
<feature type="compositionally biased region" description="Pro residues" evidence="3">
    <location>
        <begin position="62"/>
        <end position="87"/>
    </location>
</feature>
<feature type="compositionally biased region" description="Basic and acidic residues" evidence="3">
    <location>
        <begin position="212"/>
        <end position="246"/>
    </location>
</feature>
<name>MIC60_NEOFI</name>
<dbReference type="EMBL" id="DS027685">
    <property type="protein sequence ID" value="EAW25324.1"/>
    <property type="molecule type" value="Genomic_DNA"/>
</dbReference>
<dbReference type="RefSeq" id="XP_001267221.1">
    <property type="nucleotide sequence ID" value="XM_001267220.1"/>
</dbReference>
<dbReference type="SMR" id="A1CXH2"/>
<dbReference type="STRING" id="331117.A1CXH2"/>
<dbReference type="EnsemblFungi" id="EAW25324">
    <property type="protein sequence ID" value="EAW25324"/>
    <property type="gene ID" value="NFIA_108170"/>
</dbReference>
<dbReference type="GeneID" id="4593322"/>
<dbReference type="KEGG" id="nfi:NFIA_108170"/>
<dbReference type="VEuPathDB" id="FungiDB:NFIA_108170"/>
<dbReference type="eggNOG" id="KOG1854">
    <property type="taxonomic scope" value="Eukaryota"/>
</dbReference>
<dbReference type="HOGENOM" id="CLU_008024_1_2_1"/>
<dbReference type="OMA" id="RLDHQMQ"/>
<dbReference type="OrthoDB" id="10261039at2759"/>
<dbReference type="Proteomes" id="UP000006702">
    <property type="component" value="Unassembled WGS sequence"/>
</dbReference>
<dbReference type="GO" id="GO:0061617">
    <property type="term" value="C:MICOS complex"/>
    <property type="evidence" value="ECO:0007669"/>
    <property type="project" value="TreeGrafter"/>
</dbReference>
<dbReference type="GO" id="GO:0042407">
    <property type="term" value="P:cristae formation"/>
    <property type="evidence" value="ECO:0007669"/>
    <property type="project" value="TreeGrafter"/>
</dbReference>
<dbReference type="InterPro" id="IPR019133">
    <property type="entry name" value="MIC60"/>
</dbReference>
<dbReference type="PANTHER" id="PTHR15415:SF7">
    <property type="entry name" value="MICOS COMPLEX SUBUNIT MIC60"/>
    <property type="match status" value="1"/>
</dbReference>
<dbReference type="PANTHER" id="PTHR15415">
    <property type="entry name" value="MITOFILIN"/>
    <property type="match status" value="1"/>
</dbReference>
<dbReference type="Pfam" id="PF09731">
    <property type="entry name" value="Mitofilin"/>
    <property type="match status" value="2"/>
</dbReference>
<proteinExistence type="inferred from homology"/>
<organism>
    <name type="scientific">Neosartorya fischeri (strain ATCC 1020 / DSM 3700 / CBS 544.65 / FGSC A1164 / JCM 1740 / NRRL 181 / WB 181)</name>
    <name type="common">Aspergillus fischerianus</name>
    <dbReference type="NCBI Taxonomy" id="331117"/>
    <lineage>
        <taxon>Eukaryota</taxon>
        <taxon>Fungi</taxon>
        <taxon>Dikarya</taxon>
        <taxon>Ascomycota</taxon>
        <taxon>Pezizomycotina</taxon>
        <taxon>Eurotiomycetes</taxon>
        <taxon>Eurotiomycetidae</taxon>
        <taxon>Eurotiales</taxon>
        <taxon>Aspergillaceae</taxon>
        <taxon>Aspergillus</taxon>
        <taxon>Aspergillus subgen. Fumigati</taxon>
    </lineage>
</organism>
<reference key="1">
    <citation type="journal article" date="2008" name="PLoS Genet.">
        <title>Genomic islands in the pathogenic filamentous fungus Aspergillus fumigatus.</title>
        <authorList>
            <person name="Fedorova N.D."/>
            <person name="Khaldi N."/>
            <person name="Joardar V.S."/>
            <person name="Maiti R."/>
            <person name="Amedeo P."/>
            <person name="Anderson M.J."/>
            <person name="Crabtree J."/>
            <person name="Silva J.C."/>
            <person name="Badger J.H."/>
            <person name="Albarraq A."/>
            <person name="Angiuoli S."/>
            <person name="Bussey H."/>
            <person name="Bowyer P."/>
            <person name="Cotty P.J."/>
            <person name="Dyer P.S."/>
            <person name="Egan A."/>
            <person name="Galens K."/>
            <person name="Fraser-Liggett C.M."/>
            <person name="Haas B.J."/>
            <person name="Inman J.M."/>
            <person name="Kent R."/>
            <person name="Lemieux S."/>
            <person name="Malavazi I."/>
            <person name="Orvis J."/>
            <person name="Roemer T."/>
            <person name="Ronning C.M."/>
            <person name="Sundaram J.P."/>
            <person name="Sutton G."/>
            <person name="Turner G."/>
            <person name="Venter J.C."/>
            <person name="White O.R."/>
            <person name="Whitty B.R."/>
            <person name="Youngman P."/>
            <person name="Wolfe K.H."/>
            <person name="Goldman G.H."/>
            <person name="Wortman J.R."/>
            <person name="Jiang B."/>
            <person name="Denning D.W."/>
            <person name="Nierman W.C."/>
        </authorList>
    </citation>
    <scope>NUCLEOTIDE SEQUENCE [LARGE SCALE GENOMIC DNA]</scope>
    <source>
        <strain>ATCC 1020 / DSM 3700 / CBS 544.65 / FGSC A1164 / JCM 1740 / NRRL 181 / WB 181</strain>
    </source>
</reference>
<comment type="function">
    <text evidence="1">Component of the MICOS complex, a large protein complex of the mitochondrial inner membrane that plays crucial roles in the maintenance of crista junctions, inner membrane architecture, and formation of contact sites to the outer membrane. Plays a role in keeping cristae membranes connected to the inner boundary membrane. Also promotes protein import via the mitochondrial intermembrane space assembly (MIA) pathway (By similarity).</text>
</comment>
<comment type="subunit">
    <text evidence="1">Component of the mitochondrial contact site and cristae organizing system (MICOS) complex.</text>
</comment>
<comment type="subcellular location">
    <subcellularLocation>
        <location evidence="1">Mitochondrion inner membrane</location>
        <topology evidence="1">Single-pass membrane protein</topology>
    </subcellularLocation>
</comment>
<comment type="similarity">
    <text evidence="4">Belongs to the MICOS complex subunit Mic60 family.</text>
</comment>
<evidence type="ECO:0000250" key="1"/>
<evidence type="ECO:0000255" key="2"/>
<evidence type="ECO:0000256" key="3">
    <source>
        <dbReference type="SAM" id="MobiDB-lite"/>
    </source>
</evidence>
<evidence type="ECO:0000305" key="4"/>
<protein>
    <recommendedName>
        <fullName>MICOS complex subunit MIC60</fullName>
    </recommendedName>
    <alternativeName>
        <fullName>Mitofilin</fullName>
    </alternativeName>
</protein>
<sequence>MLRSSFTQSRQLLLSPARSRTAAQWLPKAGASNRLAGQRFFADAKPPVTGAPTPASPSSESPIPPESVPKPSPAAEAPPPPPPPPAPARKTGRFRKFLLYLILTSGFAYGGGIFLALKSDNFHDFFTEYVPYGEDCVLYFEERDFYRRFPNTLRNQNRAPKDEGHTVTIPSKSGLSWKVADEESGADVSQKGPHMSALDNGEKAQLKPGAAKPEEKVAAVEKAKAESAAKEQSSDDKKKVQEEPKKPAAPAVTPIEFATVSEGDEEVVQELVKTFNDIITVIGADENAHKFSGAVNKAKEELRTIGEKIIAIRNEARNAAQEEIKQAHATFDESARELIRRFEEARAHDAAQYREEFEVERERLARAYQEKVNTELQRAQEVAEQRLKNELVEQAIELNRKYLHEVKDLVEREREGRLSKLNELTANVNLLEKLTTDWKEVIDTNLKTQQLQVAVDAVRSVLERSTVPRPFVRELVAVKELAAGDPVVEAAIASINPTAYQRGIPSTSQIIERFRRVADEVRKASLLPEDAGIASHAASLVLSKVMFKKDAVAGSDDVESVLLRTEHLLEEGNLDDAAREMNTLKGWAKILSKDWLSDVRRVLEVKQALEVIETEARLQCLRVE</sequence>
<accession>A1CXH2</accession>